<keyword id="KW-0025">Alternative splicing</keyword>
<keyword id="KW-0067">ATP-binding</keyword>
<keyword id="KW-0436">Ligase</keyword>
<keyword id="KW-0460">Magnesium</keyword>
<keyword id="KW-0464">Manganese</keyword>
<keyword id="KW-0479">Metal-binding</keyword>
<keyword id="KW-0547">Nucleotide-binding</keyword>
<keyword id="KW-1267">Proteomics identification</keyword>
<keyword id="KW-1185">Reference proteome</keyword>
<name>CRNS1_HUMAN</name>
<dbReference type="EC" id="6.3.2.11" evidence="4"/>
<dbReference type="EMBL" id="EF560746">
    <property type="protein sequence ID" value="ABQ59056.1"/>
    <property type="status" value="ALT_INIT"/>
    <property type="molecule type" value="mRNA"/>
</dbReference>
<dbReference type="EMBL" id="AB037815">
    <property type="protein sequence ID" value="BAA92632.1"/>
    <property type="status" value="ALT_INIT"/>
    <property type="molecule type" value="mRNA"/>
</dbReference>
<dbReference type="EMBL" id="AK289938">
    <property type="protein sequence ID" value="BAF82627.1"/>
    <property type="molecule type" value="mRNA"/>
</dbReference>
<dbReference type="EMBL" id="AK294035">
    <property type="protein sequence ID" value="BAG57387.1"/>
    <property type="molecule type" value="mRNA"/>
</dbReference>
<dbReference type="EMBL" id="AP003419">
    <property type="status" value="NOT_ANNOTATED_CDS"/>
    <property type="molecule type" value="Genomic_DNA"/>
</dbReference>
<dbReference type="EMBL" id="BC036557">
    <property type="protein sequence ID" value="AAH36557.1"/>
    <property type="molecule type" value="mRNA"/>
</dbReference>
<dbReference type="CCDS" id="CCDS44658.1">
    <molecule id="A5YM72-1"/>
</dbReference>
<dbReference type="CCDS" id="CCDS53667.1">
    <molecule id="A5YM72-5"/>
</dbReference>
<dbReference type="RefSeq" id="NP_001159694.1">
    <molecule id="A5YM72-5"/>
    <property type="nucleotide sequence ID" value="NM_001166222.2"/>
</dbReference>
<dbReference type="RefSeq" id="NP_001381507.1">
    <molecule id="A5YM72-1"/>
    <property type="nucleotide sequence ID" value="NM_001394578.1"/>
</dbReference>
<dbReference type="RefSeq" id="NP_001381508.1">
    <molecule id="A5YM72-1"/>
    <property type="nucleotide sequence ID" value="NM_001394579.1"/>
</dbReference>
<dbReference type="RefSeq" id="NP_065862.1">
    <molecule id="A5YM72-1"/>
    <property type="nucleotide sequence ID" value="NM_020811.2"/>
</dbReference>
<dbReference type="RefSeq" id="XP_011543491.1">
    <property type="nucleotide sequence ID" value="XM_011545189.2"/>
</dbReference>
<dbReference type="RefSeq" id="XP_016873543.1">
    <property type="nucleotide sequence ID" value="XM_017018054.1"/>
</dbReference>
<dbReference type="SMR" id="A5YM72"/>
<dbReference type="BioGRID" id="121624">
    <property type="interactions" value="3"/>
</dbReference>
<dbReference type="FunCoup" id="A5YM72">
    <property type="interactions" value="111"/>
</dbReference>
<dbReference type="IntAct" id="A5YM72">
    <property type="interactions" value="3"/>
</dbReference>
<dbReference type="STRING" id="9606.ENSP00000389009"/>
<dbReference type="GlyGen" id="A5YM72">
    <property type="glycosylation" value="1 site"/>
</dbReference>
<dbReference type="iPTMnet" id="A5YM72"/>
<dbReference type="PhosphoSitePlus" id="A5YM72"/>
<dbReference type="SwissPalm" id="A5YM72"/>
<dbReference type="BioMuta" id="CARNS1"/>
<dbReference type="jPOST" id="A5YM72"/>
<dbReference type="MassIVE" id="A5YM72"/>
<dbReference type="PaxDb" id="9606-ENSP00000389009"/>
<dbReference type="PeptideAtlas" id="A5YM72"/>
<dbReference type="ProteomicsDB" id="21338"/>
<dbReference type="ProteomicsDB" id="26449"/>
<dbReference type="ProteomicsDB" id="764">
    <molecule id="A5YM72-1"/>
</dbReference>
<dbReference type="ProteomicsDB" id="765">
    <molecule id="A5YM72-2"/>
</dbReference>
<dbReference type="ProteomicsDB" id="766">
    <molecule id="A5YM72-3"/>
</dbReference>
<dbReference type="Antibodypedia" id="30386">
    <property type="antibodies" value="89 antibodies from 18 providers"/>
</dbReference>
<dbReference type="DNASU" id="57571"/>
<dbReference type="Ensembl" id="ENST00000307823.7">
    <molecule id="A5YM72-1"/>
    <property type="protein sequence ID" value="ENSP00000308268.3"/>
    <property type="gene ID" value="ENSG00000172508.11"/>
</dbReference>
<dbReference type="Ensembl" id="ENST00000445895.2">
    <molecule id="A5YM72-5"/>
    <property type="protein sequence ID" value="ENSP00000389009.2"/>
    <property type="gene ID" value="ENSG00000172508.11"/>
</dbReference>
<dbReference type="Ensembl" id="ENST00000531040.5">
    <molecule id="A5YM72-4"/>
    <property type="protein sequence ID" value="ENSP00000431670.1"/>
    <property type="gene ID" value="ENSG00000172508.11"/>
</dbReference>
<dbReference type="Ensembl" id="ENST00000687366.1">
    <molecule id="A5YM72-5"/>
    <property type="protein sequence ID" value="ENSP00000510668.1"/>
    <property type="gene ID" value="ENSG00000172508.11"/>
</dbReference>
<dbReference type="GeneID" id="57571"/>
<dbReference type="KEGG" id="hsa:57571"/>
<dbReference type="MANE-Select" id="ENST00000687366.1">
    <molecule id="A5YM72-5"/>
    <property type="protein sequence ID" value="ENSP00000510668.1"/>
    <property type="RefSeq nucleotide sequence ID" value="NM_001166222.2"/>
    <property type="RefSeq protein sequence ID" value="NP_001159694.1"/>
</dbReference>
<dbReference type="UCSC" id="uc009yrp.3">
    <molecule id="A5YM72-1"/>
    <property type="organism name" value="human"/>
</dbReference>
<dbReference type="AGR" id="HGNC:29268"/>
<dbReference type="CTD" id="57571"/>
<dbReference type="DisGeNET" id="57571"/>
<dbReference type="GeneCards" id="CARNS1"/>
<dbReference type="HGNC" id="HGNC:29268">
    <property type="gene designation" value="CARNS1"/>
</dbReference>
<dbReference type="HPA" id="ENSG00000172508">
    <property type="expression patterns" value="Group enriched (brain, skeletal muscle)"/>
</dbReference>
<dbReference type="MIM" id="613368">
    <property type="type" value="gene"/>
</dbReference>
<dbReference type="neXtProt" id="NX_A5YM72"/>
<dbReference type="OpenTargets" id="ENSG00000172508"/>
<dbReference type="PharmGKB" id="PA165543288"/>
<dbReference type="VEuPathDB" id="HostDB:ENSG00000172508"/>
<dbReference type="eggNOG" id="ENOG502QRI6">
    <property type="taxonomic scope" value="Eukaryota"/>
</dbReference>
<dbReference type="GeneTree" id="ENSGT00390000018717"/>
<dbReference type="HOGENOM" id="CLU_315906_0_0_1"/>
<dbReference type="InParanoid" id="A5YM72"/>
<dbReference type="OrthoDB" id="434648at2759"/>
<dbReference type="PAN-GO" id="A5YM72">
    <property type="GO annotations" value="4 GO annotations based on evolutionary models"/>
</dbReference>
<dbReference type="PhylomeDB" id="A5YM72"/>
<dbReference type="TreeFam" id="TF337030"/>
<dbReference type="BioCyc" id="MetaCyc:MONOMER66-34422"/>
<dbReference type="BRENDA" id="6.3.2.11">
    <property type="organism ID" value="2681"/>
</dbReference>
<dbReference type="PathwayCommons" id="A5YM72"/>
<dbReference type="Reactome" id="R-HSA-70921">
    <property type="pathway name" value="Histidine catabolism"/>
</dbReference>
<dbReference type="SABIO-RK" id="A5YM72"/>
<dbReference type="SignaLink" id="A5YM72"/>
<dbReference type="BioGRID-ORCS" id="57571">
    <property type="hits" value="25 hits in 1141 CRISPR screens"/>
</dbReference>
<dbReference type="GenomeRNAi" id="57571"/>
<dbReference type="Pharos" id="A5YM72">
    <property type="development level" value="Tbio"/>
</dbReference>
<dbReference type="PRO" id="PR:A5YM72"/>
<dbReference type="Proteomes" id="UP000005640">
    <property type="component" value="Chromosome 11"/>
</dbReference>
<dbReference type="RNAct" id="A5YM72">
    <property type="molecule type" value="protein"/>
</dbReference>
<dbReference type="Bgee" id="ENSG00000172508">
    <property type="expression patterns" value="Expressed in inferior vagus X ganglion and 137 other cell types or tissues"/>
</dbReference>
<dbReference type="GO" id="GO:0005829">
    <property type="term" value="C:cytosol"/>
    <property type="evidence" value="ECO:0000304"/>
    <property type="project" value="Reactome"/>
</dbReference>
<dbReference type="GO" id="GO:0005524">
    <property type="term" value="F:ATP binding"/>
    <property type="evidence" value="ECO:0007669"/>
    <property type="project" value="UniProtKB-KW"/>
</dbReference>
<dbReference type="GO" id="GO:0016887">
    <property type="term" value="F:ATP hydrolysis activity"/>
    <property type="evidence" value="ECO:0000314"/>
    <property type="project" value="MGI"/>
</dbReference>
<dbReference type="GO" id="GO:0047730">
    <property type="term" value="F:carnosine synthase activity"/>
    <property type="evidence" value="ECO:0000314"/>
    <property type="project" value="UniProtKB"/>
</dbReference>
<dbReference type="GO" id="GO:0102102">
    <property type="term" value="F:homocarnosine synthase activity"/>
    <property type="evidence" value="ECO:0000314"/>
    <property type="project" value="UniProtKB"/>
</dbReference>
<dbReference type="GO" id="GO:0046872">
    <property type="term" value="F:metal ion binding"/>
    <property type="evidence" value="ECO:0007669"/>
    <property type="project" value="UniProtKB-KW"/>
</dbReference>
<dbReference type="GO" id="GO:0035499">
    <property type="term" value="P:carnosine biosynthetic process"/>
    <property type="evidence" value="ECO:0000314"/>
    <property type="project" value="UniProtKB"/>
</dbReference>
<dbReference type="GO" id="GO:0006548">
    <property type="term" value="P:L-histidine catabolic process"/>
    <property type="evidence" value="ECO:0000304"/>
    <property type="project" value="Reactome"/>
</dbReference>
<dbReference type="FunFam" id="3.30.470.20:FF:000040">
    <property type="entry name" value="Carnosine synthase 1"/>
    <property type="match status" value="1"/>
</dbReference>
<dbReference type="FunFam" id="3.40.50.20:FF:000018">
    <property type="entry name" value="Carnosine synthase 1"/>
    <property type="match status" value="1"/>
</dbReference>
<dbReference type="Gene3D" id="3.40.50.20">
    <property type="match status" value="1"/>
</dbReference>
<dbReference type="Gene3D" id="3.30.470.20">
    <property type="entry name" value="ATP-grasp fold, B domain"/>
    <property type="match status" value="1"/>
</dbReference>
<dbReference type="InterPro" id="IPR011761">
    <property type="entry name" value="ATP-grasp"/>
</dbReference>
<dbReference type="InterPro" id="IPR041472">
    <property type="entry name" value="BL00235/CARNS1_N"/>
</dbReference>
<dbReference type="InterPro" id="IPR031046">
    <property type="entry name" value="CARNS1"/>
</dbReference>
<dbReference type="PANTHER" id="PTHR48066">
    <property type="entry name" value="CARNOSINE SYNTHASE 1"/>
    <property type="match status" value="1"/>
</dbReference>
<dbReference type="PANTHER" id="PTHR48066:SF1">
    <property type="entry name" value="CARNOSINE SYNTHASE 1"/>
    <property type="match status" value="1"/>
</dbReference>
<dbReference type="Pfam" id="PF18130">
    <property type="entry name" value="ATPgrasp_N"/>
    <property type="match status" value="1"/>
</dbReference>
<dbReference type="Pfam" id="PF15632">
    <property type="entry name" value="ATPgrasp_Ter"/>
    <property type="match status" value="1"/>
</dbReference>
<dbReference type="SUPFAM" id="SSF56059">
    <property type="entry name" value="Glutathione synthetase ATP-binding domain-like"/>
    <property type="match status" value="1"/>
</dbReference>
<dbReference type="PROSITE" id="PS50975">
    <property type="entry name" value="ATP_GRASP"/>
    <property type="match status" value="1"/>
</dbReference>
<comment type="function">
    <text evidence="4">Catalyzes the synthesis of carnosine and homocarnosine. Carnosine is synthesized more efficiently than homocarnosine.</text>
</comment>
<comment type="catalytic activity">
    <reaction>
        <text>beta-alanine + L-histidine + ATP = carnosine + ADP + phosphate + H(+)</text>
        <dbReference type="Rhea" id="RHEA:19297"/>
        <dbReference type="ChEBI" id="CHEBI:15378"/>
        <dbReference type="ChEBI" id="CHEBI:30616"/>
        <dbReference type="ChEBI" id="CHEBI:43474"/>
        <dbReference type="ChEBI" id="CHEBI:57485"/>
        <dbReference type="ChEBI" id="CHEBI:57595"/>
        <dbReference type="ChEBI" id="CHEBI:57966"/>
        <dbReference type="ChEBI" id="CHEBI:456216"/>
        <dbReference type="EC" id="6.3.2.11"/>
    </reaction>
    <physiologicalReaction direction="left-to-right" evidence="9">
        <dbReference type="Rhea" id="RHEA:19298"/>
    </physiologicalReaction>
</comment>
<comment type="catalytic activity">
    <reaction evidence="4">
        <text>4-aminobutanoate + L-histidine + ATP = L-homocarnosine + ADP + phosphate + H(+)</text>
        <dbReference type="Rhea" id="RHEA:59568"/>
        <dbReference type="ChEBI" id="CHEBI:15378"/>
        <dbReference type="ChEBI" id="CHEBI:30616"/>
        <dbReference type="ChEBI" id="CHEBI:43474"/>
        <dbReference type="ChEBI" id="CHEBI:57595"/>
        <dbReference type="ChEBI" id="CHEBI:59888"/>
        <dbReference type="ChEBI" id="CHEBI:143075"/>
        <dbReference type="ChEBI" id="CHEBI:456216"/>
    </reaction>
    <physiologicalReaction direction="left-to-right" evidence="9">
        <dbReference type="Rhea" id="RHEA:59569"/>
    </physiologicalReaction>
</comment>
<comment type="cofactor">
    <cofactor evidence="2">
        <name>Mg(2+)</name>
        <dbReference type="ChEBI" id="CHEBI:18420"/>
    </cofactor>
    <cofactor evidence="2">
        <name>Mn(2+)</name>
        <dbReference type="ChEBI" id="CHEBI:29035"/>
    </cofactor>
    <text evidence="2">Binds 2 magnesium or manganese ions per subunit.</text>
</comment>
<comment type="biophysicochemical properties">
    <kinetics>
        <KM evidence="4">0.09 mM for beta-alanine</KM>
        <KM evidence="4">1.84 mM for 4-aminobutanoate</KM>
        <KM evidence="4">0.37 mM for L-histidine</KM>
        <KM evidence="4">4.67 mM for L-lysine</KM>
        <KM evidence="4">7.66 mM for L-ornithine</KM>
        <KM evidence="4">24.7 mM for N-methylhistidine</KM>
        <Vmax evidence="4">65.3 nmol/min/mg enzyme toward beta-alanine</Vmax>
        <Vmax evidence="4">54.7 nmol/min/mg enzyme toward gamma-aminobutyrate</Vmax>
        <Vmax evidence="4">0.76 nmol/min/mg enzyme toward L-histidine</Vmax>
        <Vmax evidence="4">0.61 nmol/min/mg enzyme toward L-lysine</Vmax>
        <Vmax evidence="4">0.28 nmol/min/mg enzyme toward L-ornithine</Vmax>
        <Vmax evidence="4">0.62 nmol/min/mg enzyme toward N-methylhistidine</Vmax>
    </kinetics>
</comment>
<comment type="subunit">
    <text evidence="1">Homotetramer.</text>
</comment>
<comment type="alternative products">
    <event type="alternative splicing"/>
    <isoform>
        <id>A5YM72-1</id>
        <name>1</name>
        <sequence type="displayed"/>
    </isoform>
    <isoform>
        <id>A5YM72-2</id>
        <name>2</name>
        <sequence type="described" ref="VSP_032925"/>
    </isoform>
    <isoform>
        <id>A5YM72-3</id>
        <name>3</name>
        <sequence type="described" ref="VSP_032926"/>
    </isoform>
    <isoform>
        <id>A5YM72-4</id>
        <name>4</name>
        <sequence type="described" ref="VSP_053735 VSP_053736"/>
    </isoform>
    <isoform>
        <id>A5YM72-5</id>
        <name>5</name>
        <sequence type="described" ref="VSP_053735"/>
    </isoform>
</comment>
<comment type="sequence caution" evidence="8">
    <conflict type="erroneous initiation">
        <sequence resource="EMBL-CDS" id="ABQ59056"/>
    </conflict>
    <text>Extended N-terminus.</text>
</comment>
<comment type="sequence caution" evidence="8">
    <conflict type="erroneous initiation">
        <sequence resource="EMBL-CDS" id="BAA92632"/>
    </conflict>
    <text>Extended N-terminus.</text>
</comment>
<organism>
    <name type="scientific">Homo sapiens</name>
    <name type="common">Human</name>
    <dbReference type="NCBI Taxonomy" id="9606"/>
    <lineage>
        <taxon>Eukaryota</taxon>
        <taxon>Metazoa</taxon>
        <taxon>Chordata</taxon>
        <taxon>Craniata</taxon>
        <taxon>Vertebrata</taxon>
        <taxon>Euteleostomi</taxon>
        <taxon>Mammalia</taxon>
        <taxon>Eutheria</taxon>
        <taxon>Euarchontoglires</taxon>
        <taxon>Primates</taxon>
        <taxon>Haplorrhini</taxon>
        <taxon>Catarrhini</taxon>
        <taxon>Hominidae</taxon>
        <taxon>Homo</taxon>
    </lineage>
</organism>
<gene>
    <name evidence="10" type="primary">CARNS1</name>
    <name type="synonym">ATPGD1</name>
    <name type="synonym">KIAA1394</name>
</gene>
<feature type="chain" id="PRO_0000329036" description="Carnosine synthase 1">
    <location>
        <begin position="1"/>
        <end position="827"/>
    </location>
</feature>
<feature type="domain" description="ATP-grasp" evidence="2">
    <location>
        <begin position="516"/>
        <end position="720"/>
    </location>
</feature>
<feature type="binding site" evidence="2">
    <location>
        <begin position="542"/>
        <end position="611"/>
    </location>
    <ligand>
        <name>ATP</name>
        <dbReference type="ChEBI" id="CHEBI:30616"/>
    </ligand>
</feature>
<feature type="binding site" evidence="2">
    <location>
        <position position="677"/>
    </location>
    <ligand>
        <name>Mg(2+)</name>
        <dbReference type="ChEBI" id="CHEBI:18420"/>
        <label>1</label>
    </ligand>
</feature>
<feature type="binding site" evidence="2">
    <location>
        <position position="677"/>
    </location>
    <ligand>
        <name>Mn(2+)</name>
        <dbReference type="ChEBI" id="CHEBI:29035"/>
        <label>1</label>
    </ligand>
</feature>
<feature type="binding site" evidence="2">
    <location>
        <position position="689"/>
    </location>
    <ligand>
        <name>Mg(2+)</name>
        <dbReference type="ChEBI" id="CHEBI:18420"/>
        <label>1</label>
    </ligand>
</feature>
<feature type="binding site" evidence="2">
    <location>
        <position position="689"/>
    </location>
    <ligand>
        <name>Mg(2+)</name>
        <dbReference type="ChEBI" id="CHEBI:18420"/>
        <label>2</label>
    </ligand>
</feature>
<feature type="binding site" evidence="2">
    <location>
        <position position="689"/>
    </location>
    <ligand>
        <name>Mn(2+)</name>
        <dbReference type="ChEBI" id="CHEBI:29035"/>
        <label>1</label>
    </ligand>
</feature>
<feature type="binding site" evidence="2">
    <location>
        <position position="689"/>
    </location>
    <ligand>
        <name>Mn(2+)</name>
        <dbReference type="ChEBI" id="CHEBI:29035"/>
        <label>2</label>
    </ligand>
</feature>
<feature type="binding site" evidence="2">
    <location>
        <position position="691"/>
    </location>
    <ligand>
        <name>Mg(2+)</name>
        <dbReference type="ChEBI" id="CHEBI:18420"/>
        <label>2</label>
    </ligand>
</feature>
<feature type="binding site" evidence="2">
    <location>
        <position position="691"/>
    </location>
    <ligand>
        <name>Mn(2+)</name>
        <dbReference type="ChEBI" id="CHEBI:29035"/>
        <label>2</label>
    </ligand>
</feature>
<feature type="splice variant" id="VSP_032925" description="In isoform 2." evidence="6 7">
    <location>
        <begin position="1"/>
        <end position="442"/>
    </location>
</feature>
<feature type="splice variant" id="VSP_032926" description="In isoform 3." evidence="5">
    <original>M</original>
    <variation>MCPLAHPAQDLPLLPSQLSLDPSGPEWDCPLGSKDLEEEGPWGGGSGLPPTGCFPGSWRQDVGLDCKGSPEGAEARAWTVYYYSLLQSCLQQAGLPETQDRGQVPRTGCPGAEVTLCVLGSPSTFLPVLLEGGVQSPGNM</variation>
    <location>
        <position position="1"/>
    </location>
</feature>
<feature type="splice variant" id="VSP_053735" description="In isoform 4 and isoform 5." evidence="6">
    <original>M</original>
    <variation>MLSLDPSGPEWDCPLGSKDLEEEGPWGGGSGLPPTGCFPGSWRQDVGLDCKGSPEGAEARAWTVYYYSLLQSCLQQAGLPETQDRGQVPRTGCPGAEVTLCVLGSPSTFLPVLLEGGVQSPGNM</variation>
    <location>
        <position position="1"/>
    </location>
</feature>
<feature type="splice variant" id="VSP_053736" description="In isoform 4." evidence="6">
    <location>
        <begin position="272"/>
        <end position="297"/>
    </location>
</feature>
<feature type="sequence variant" id="VAR_042625" description="In dbSNP:rs868167.">
    <original>P</original>
    <variation>T</variation>
    <location>
        <position position="14"/>
    </location>
</feature>
<feature type="sequence variant" id="VAR_060320" description="In dbSNP:rs17853668." evidence="3">
    <original>M</original>
    <variation>L</variation>
    <location>
        <position position="498"/>
    </location>
</feature>
<feature type="sequence conflict" description="In Ref. 1; ABQ59056." evidence="8" ref="1">
    <original>A</original>
    <variation>T</variation>
    <location>
        <position position="23"/>
    </location>
</feature>
<feature type="sequence conflict" description="In Ref. 3; BAF82627." evidence="8" ref="3">
    <original>S</original>
    <variation>P</variation>
    <location>
        <position position="576"/>
    </location>
</feature>
<feature type="sequence conflict" description="In Ref. 3; BAF82627." evidence="8" ref="3">
    <original>R</original>
    <variation>H</variation>
    <location>
        <position position="800"/>
    </location>
</feature>
<feature type="sequence conflict" description="In Ref. 3; BAG57387." evidence="8" ref="3">
    <original>L</original>
    <variation>F</variation>
    <location sequence="A5YM72-4">
        <position position="2"/>
    </location>
</feature>
<feature type="sequence conflict" description="In Ref. 3; BAG57387." evidence="8" ref="3">
    <original>A</original>
    <variation>V</variation>
    <location sequence="A5YM72-4">
        <position position="395"/>
    </location>
</feature>
<sequence>MLLCLSPAWLMKVPAPGQPGEAALLVSKAVSFHPGGLTFLDDFVPPRRATYFLAGLGLGPGRGREAAELARDLTCPTGASAELARLLEDRLLTRQLLAQQGGVAVPATLAFTYKPPGLLRGGDASLGLRLVELSGKEGQETLVKEEVEAFLRSEALGDILQVAVKLSGWRWRGRQAWRLHPRAELGAVVDTVLALLEKLEEEESVLVEAVYPPAQLPCSDGPSPGPGLAVRICAVVCRTQGDRPLLSKVVCGVGRGDRPLRHHNSLPRTLEVALAQCGLGEEAQVAAVRQRVKAAAEAALAAVLALEAGLSAEQRGGRRAHTDFLGVDFALTAAGGVLTPVALELNGGLCLEACGALEGLWAAPRLGPAADEAVAAPLVETMLRRSARCLMEGKQLLVVGAGGVSKKFVWEAARDYGLQLHLVESDPNHFASQLVQTFIHFDMTEHRRDEENARLLAELVRARGLKLDGCFSYWDDCLVLTALLCQELGLPCSSPAAMRLAKQKSLTQLHLLHHHGPPWPAPSLHAVPCCPLESEADVERAVHQVPLPGVMKLEFGAGAVGVRLVEDAPQCHEHFSRITRDLQGEADHPGIGLGWGNAMLLMEFVEGTEHDVDLVLFGGRLLAAFVSDNGPTRLPGFTETAACMPTGLAPEQEAQMVQAAFRCCLGCGLLDGVFNVELKLTGAGPRLIEINPRMGGFYLRDWILELYGVDLLLAAVMVACGLRPALPTRPRARGHLVGVMCLVSQHLQALSSTASRETLQALHDRGLLRLNLLEEALVPGEYEEPYCSVACAGPSPTEARLRLLGLCQGLGIDGPSYPVAHFLSHFK</sequence>
<protein>
    <recommendedName>
        <fullName evidence="9">Carnosine synthase 1</fullName>
        <ecNumber evidence="4">6.3.2.11</ecNumber>
    </recommendedName>
    <alternativeName>
        <fullName>ATP-grasp domain-containing protein 1</fullName>
    </alternativeName>
</protein>
<evidence type="ECO:0000250" key="1">
    <source>
        <dbReference type="UniProtKB" id="D3KCC4"/>
    </source>
</evidence>
<evidence type="ECO:0000255" key="2">
    <source>
        <dbReference type="PROSITE-ProRule" id="PRU00409"/>
    </source>
</evidence>
<evidence type="ECO:0000269" key="3">
    <source>
    </source>
</evidence>
<evidence type="ECO:0000269" key="4">
    <source>
    </source>
</evidence>
<evidence type="ECO:0000303" key="5">
    <source>
    </source>
</evidence>
<evidence type="ECO:0000303" key="6">
    <source>
    </source>
</evidence>
<evidence type="ECO:0000303" key="7">
    <source>
    </source>
</evidence>
<evidence type="ECO:0000305" key="8"/>
<evidence type="ECO:0000305" key="9">
    <source>
    </source>
</evidence>
<evidence type="ECO:0000312" key="10">
    <source>
        <dbReference type="HGNC" id="HGNC:29268"/>
    </source>
</evidence>
<proteinExistence type="evidence at protein level"/>
<accession>A5YM72</accession>
<accession>A8K1M3</accession>
<accession>B4DFC6</accession>
<accession>E9PK38</accession>
<accession>F5H427</accession>
<accession>Q8N467</accession>
<accession>Q9P2F3</accession>
<reference key="1">
    <citation type="submission" date="2007-04" db="EMBL/GenBank/DDBJ databases">
        <authorList>
            <person name="Schupp I."/>
        </authorList>
    </citation>
    <scope>NUCLEOTIDE SEQUENCE [MRNA] (ISOFORM 1)</scope>
</reference>
<reference key="2">
    <citation type="journal article" date="2000" name="DNA Res.">
        <title>Prediction of the coding sequences of unidentified human genes. XVI. The complete sequences of 150 new cDNA clones from brain which code for large proteins in vitro.</title>
        <authorList>
            <person name="Nagase T."/>
            <person name="Kikuno R."/>
            <person name="Ishikawa K."/>
            <person name="Hirosawa M."/>
            <person name="Ohara O."/>
        </authorList>
    </citation>
    <scope>NUCLEOTIDE SEQUENCE [LARGE SCALE MRNA] (ISOFORM 3)</scope>
    <source>
        <tissue>Brain</tissue>
    </source>
</reference>
<reference key="3">
    <citation type="journal article" date="2004" name="Nat. Genet.">
        <title>Complete sequencing and characterization of 21,243 full-length human cDNAs.</title>
        <authorList>
            <person name="Ota T."/>
            <person name="Suzuki Y."/>
            <person name="Nishikawa T."/>
            <person name="Otsuki T."/>
            <person name="Sugiyama T."/>
            <person name="Irie R."/>
            <person name="Wakamatsu A."/>
            <person name="Hayashi K."/>
            <person name="Sato H."/>
            <person name="Nagai K."/>
            <person name="Kimura K."/>
            <person name="Makita H."/>
            <person name="Sekine M."/>
            <person name="Obayashi M."/>
            <person name="Nishi T."/>
            <person name="Shibahara T."/>
            <person name="Tanaka T."/>
            <person name="Ishii S."/>
            <person name="Yamamoto J."/>
            <person name="Saito K."/>
            <person name="Kawai Y."/>
            <person name="Isono Y."/>
            <person name="Nakamura Y."/>
            <person name="Nagahari K."/>
            <person name="Murakami K."/>
            <person name="Yasuda T."/>
            <person name="Iwayanagi T."/>
            <person name="Wagatsuma M."/>
            <person name="Shiratori A."/>
            <person name="Sudo H."/>
            <person name="Hosoiri T."/>
            <person name="Kaku Y."/>
            <person name="Kodaira H."/>
            <person name="Kondo H."/>
            <person name="Sugawara M."/>
            <person name="Takahashi M."/>
            <person name="Kanda K."/>
            <person name="Yokoi T."/>
            <person name="Furuya T."/>
            <person name="Kikkawa E."/>
            <person name="Omura Y."/>
            <person name="Abe K."/>
            <person name="Kamihara K."/>
            <person name="Katsuta N."/>
            <person name="Sato K."/>
            <person name="Tanikawa M."/>
            <person name="Yamazaki M."/>
            <person name="Ninomiya K."/>
            <person name="Ishibashi T."/>
            <person name="Yamashita H."/>
            <person name="Murakawa K."/>
            <person name="Fujimori K."/>
            <person name="Tanai H."/>
            <person name="Kimata M."/>
            <person name="Watanabe M."/>
            <person name="Hiraoka S."/>
            <person name="Chiba Y."/>
            <person name="Ishida S."/>
            <person name="Ono Y."/>
            <person name="Takiguchi S."/>
            <person name="Watanabe S."/>
            <person name="Yosida M."/>
            <person name="Hotuta T."/>
            <person name="Kusano J."/>
            <person name="Kanehori K."/>
            <person name="Takahashi-Fujii A."/>
            <person name="Hara H."/>
            <person name="Tanase T.-O."/>
            <person name="Nomura Y."/>
            <person name="Togiya S."/>
            <person name="Komai F."/>
            <person name="Hara R."/>
            <person name="Takeuchi K."/>
            <person name="Arita M."/>
            <person name="Imose N."/>
            <person name="Musashino K."/>
            <person name="Yuuki H."/>
            <person name="Oshima A."/>
            <person name="Sasaki N."/>
            <person name="Aotsuka S."/>
            <person name="Yoshikawa Y."/>
            <person name="Matsunawa H."/>
            <person name="Ichihara T."/>
            <person name="Shiohata N."/>
            <person name="Sano S."/>
            <person name="Moriya S."/>
            <person name="Momiyama H."/>
            <person name="Satoh N."/>
            <person name="Takami S."/>
            <person name="Terashima Y."/>
            <person name="Suzuki O."/>
            <person name="Nakagawa S."/>
            <person name="Senoh A."/>
            <person name="Mizoguchi H."/>
            <person name="Goto Y."/>
            <person name="Shimizu F."/>
            <person name="Wakebe H."/>
            <person name="Hishigaki H."/>
            <person name="Watanabe T."/>
            <person name="Sugiyama A."/>
            <person name="Takemoto M."/>
            <person name="Kawakami B."/>
            <person name="Yamazaki M."/>
            <person name="Watanabe K."/>
            <person name="Kumagai A."/>
            <person name="Itakura S."/>
            <person name="Fukuzumi Y."/>
            <person name="Fujimori Y."/>
            <person name="Komiyama M."/>
            <person name="Tashiro H."/>
            <person name="Tanigami A."/>
            <person name="Fujiwara T."/>
            <person name="Ono T."/>
            <person name="Yamada K."/>
            <person name="Fujii Y."/>
            <person name="Ozaki K."/>
            <person name="Hirao M."/>
            <person name="Ohmori Y."/>
            <person name="Kawabata A."/>
            <person name="Hikiji T."/>
            <person name="Kobatake N."/>
            <person name="Inagaki H."/>
            <person name="Ikema Y."/>
            <person name="Okamoto S."/>
            <person name="Okitani R."/>
            <person name="Kawakami T."/>
            <person name="Noguchi S."/>
            <person name="Itoh T."/>
            <person name="Shigeta K."/>
            <person name="Senba T."/>
            <person name="Matsumura K."/>
            <person name="Nakajima Y."/>
            <person name="Mizuno T."/>
            <person name="Morinaga M."/>
            <person name="Sasaki M."/>
            <person name="Togashi T."/>
            <person name="Oyama M."/>
            <person name="Hata H."/>
            <person name="Watanabe M."/>
            <person name="Komatsu T."/>
            <person name="Mizushima-Sugano J."/>
            <person name="Satoh T."/>
            <person name="Shirai Y."/>
            <person name="Takahashi Y."/>
            <person name="Nakagawa K."/>
            <person name="Okumura K."/>
            <person name="Nagase T."/>
            <person name="Nomura N."/>
            <person name="Kikuchi H."/>
            <person name="Masuho Y."/>
            <person name="Yamashita R."/>
            <person name="Nakai K."/>
            <person name="Yada T."/>
            <person name="Nakamura Y."/>
            <person name="Ohara O."/>
            <person name="Isogai T."/>
            <person name="Sugano S."/>
        </authorList>
    </citation>
    <scope>NUCLEOTIDE SEQUENCE [LARGE SCALE MRNA] (ISOFORMS 2 AND 4)</scope>
    <source>
        <tissue>Cerebellum</tissue>
        <tissue>Hippocampus</tissue>
    </source>
</reference>
<reference key="4">
    <citation type="journal article" date="2006" name="Nature">
        <title>Human chromosome 11 DNA sequence and analysis including novel gene identification.</title>
        <authorList>
            <person name="Taylor T.D."/>
            <person name="Noguchi H."/>
            <person name="Totoki Y."/>
            <person name="Toyoda A."/>
            <person name="Kuroki Y."/>
            <person name="Dewar K."/>
            <person name="Lloyd C."/>
            <person name="Itoh T."/>
            <person name="Takeda T."/>
            <person name="Kim D.-W."/>
            <person name="She X."/>
            <person name="Barlow K.F."/>
            <person name="Bloom T."/>
            <person name="Bruford E."/>
            <person name="Chang J.L."/>
            <person name="Cuomo C.A."/>
            <person name="Eichler E."/>
            <person name="FitzGerald M.G."/>
            <person name="Jaffe D.B."/>
            <person name="LaButti K."/>
            <person name="Nicol R."/>
            <person name="Park H.-S."/>
            <person name="Seaman C."/>
            <person name="Sougnez C."/>
            <person name="Yang X."/>
            <person name="Zimmer A.R."/>
            <person name="Zody M.C."/>
            <person name="Birren B.W."/>
            <person name="Nusbaum C."/>
            <person name="Fujiyama A."/>
            <person name="Hattori M."/>
            <person name="Rogers J."/>
            <person name="Lander E.S."/>
            <person name="Sakaki Y."/>
        </authorList>
    </citation>
    <scope>NUCLEOTIDE SEQUENCE [LARGE SCALE GENOMIC DNA]</scope>
</reference>
<reference key="5">
    <citation type="journal article" date="2004" name="Genome Res.">
        <title>The status, quality, and expansion of the NIH full-length cDNA project: the Mammalian Gene Collection (MGC).</title>
        <authorList>
            <consortium name="The MGC Project Team"/>
        </authorList>
    </citation>
    <scope>NUCLEOTIDE SEQUENCE [LARGE SCALE MRNA] (ISOFORM 2)</scope>
    <scope>VARIANT LEU-498</scope>
    <source>
        <tissue>Kidney</tissue>
    </source>
</reference>
<reference key="6">
    <citation type="journal article" date="2010" name="J. Biol. Chem.">
        <title>Molecular identification of carnosine synthase as ATP-grasp domain-containing protein 1 (ATPGD1).</title>
        <authorList>
            <person name="Drozak J."/>
            <person name="Veiga-da-Cunha M."/>
            <person name="Vertommen D."/>
            <person name="Stroobant V."/>
            <person name="Van Schaftingen E."/>
        </authorList>
    </citation>
    <scope>FUNCTION</scope>
    <scope>CATALYTIC ACTIVITY</scope>
    <scope>BIOPHYSICOCHEMICAL PROPERTIES</scope>
</reference>